<dbReference type="EC" id="5.6.1.3" evidence="3"/>
<dbReference type="EMBL" id="CR859380">
    <property type="protein sequence ID" value="CAH91553.1"/>
    <property type="molecule type" value="mRNA"/>
</dbReference>
<dbReference type="RefSeq" id="NP_001125912.1">
    <property type="nucleotide sequence ID" value="NM_001132440.2"/>
</dbReference>
<dbReference type="SMR" id="Q5R9K7"/>
<dbReference type="FunCoup" id="Q5R9K7">
    <property type="interactions" value="1151"/>
</dbReference>
<dbReference type="STRING" id="9601.ENSPPYP00000005348"/>
<dbReference type="GeneID" id="100172845"/>
<dbReference type="KEGG" id="pon:100172845"/>
<dbReference type="CTD" id="3798"/>
<dbReference type="eggNOG" id="KOG0240">
    <property type="taxonomic scope" value="Eukaryota"/>
</dbReference>
<dbReference type="InParanoid" id="Q5R9K7"/>
<dbReference type="OrthoDB" id="3176171at2759"/>
<dbReference type="Proteomes" id="UP000001595">
    <property type="component" value="Unplaced"/>
</dbReference>
<dbReference type="GO" id="GO:1904115">
    <property type="term" value="C:axon cytoplasm"/>
    <property type="evidence" value="ECO:0007669"/>
    <property type="project" value="GOC"/>
</dbReference>
<dbReference type="GO" id="GO:0005874">
    <property type="term" value="C:microtubule"/>
    <property type="evidence" value="ECO:0007669"/>
    <property type="project" value="UniProtKB-KW"/>
</dbReference>
<dbReference type="GO" id="GO:0043204">
    <property type="term" value="C:perikaryon"/>
    <property type="evidence" value="ECO:0007669"/>
    <property type="project" value="UniProtKB-SubCell"/>
</dbReference>
<dbReference type="GO" id="GO:0048471">
    <property type="term" value="C:perinuclear region of cytoplasm"/>
    <property type="evidence" value="ECO:0007669"/>
    <property type="project" value="UniProtKB-SubCell"/>
</dbReference>
<dbReference type="GO" id="GO:0005524">
    <property type="term" value="F:ATP binding"/>
    <property type="evidence" value="ECO:0007669"/>
    <property type="project" value="UniProtKB-KW"/>
</dbReference>
<dbReference type="GO" id="GO:0008017">
    <property type="term" value="F:microtubule binding"/>
    <property type="evidence" value="ECO:0007669"/>
    <property type="project" value="InterPro"/>
</dbReference>
<dbReference type="GO" id="GO:0003777">
    <property type="term" value="F:microtubule motor activity"/>
    <property type="evidence" value="ECO:0000250"/>
    <property type="project" value="UniProtKB"/>
</dbReference>
<dbReference type="GO" id="GO:0099641">
    <property type="term" value="P:anterograde axonal protein transport"/>
    <property type="evidence" value="ECO:0000250"/>
    <property type="project" value="UniProtKB"/>
</dbReference>
<dbReference type="GO" id="GO:0016192">
    <property type="term" value="P:vesicle-mediated transport"/>
    <property type="evidence" value="ECO:0000250"/>
    <property type="project" value="UniProtKB"/>
</dbReference>
<dbReference type="CDD" id="cd23649">
    <property type="entry name" value="Khc_CBD_cc"/>
    <property type="match status" value="1"/>
</dbReference>
<dbReference type="CDD" id="cd01369">
    <property type="entry name" value="KISc_KHC_KIF5"/>
    <property type="match status" value="1"/>
</dbReference>
<dbReference type="FunFam" id="3.40.850.10:FF:000009">
    <property type="entry name" value="Kinesin-like protein"/>
    <property type="match status" value="1"/>
</dbReference>
<dbReference type="Gene3D" id="6.10.250.1590">
    <property type="match status" value="1"/>
</dbReference>
<dbReference type="Gene3D" id="3.40.850.10">
    <property type="entry name" value="Kinesin motor domain"/>
    <property type="match status" value="1"/>
</dbReference>
<dbReference type="InterPro" id="IPR027640">
    <property type="entry name" value="Kinesin-like_fam"/>
</dbReference>
<dbReference type="InterPro" id="IPR019821">
    <property type="entry name" value="Kinesin_motor_CS"/>
</dbReference>
<dbReference type="InterPro" id="IPR001752">
    <property type="entry name" value="Kinesin_motor_dom"/>
</dbReference>
<dbReference type="InterPro" id="IPR036961">
    <property type="entry name" value="Kinesin_motor_dom_sf"/>
</dbReference>
<dbReference type="InterPro" id="IPR027417">
    <property type="entry name" value="P-loop_NTPase"/>
</dbReference>
<dbReference type="PANTHER" id="PTHR47968">
    <property type="entry name" value="CENTROMERE PROTEIN E"/>
    <property type="match status" value="1"/>
</dbReference>
<dbReference type="PANTHER" id="PTHR47968:SF62">
    <property type="entry name" value="KINESIN FAMILY MEMBER 5A"/>
    <property type="match status" value="1"/>
</dbReference>
<dbReference type="Pfam" id="PF00225">
    <property type="entry name" value="Kinesin"/>
    <property type="match status" value="1"/>
</dbReference>
<dbReference type="PRINTS" id="PR00380">
    <property type="entry name" value="KINESINHEAVY"/>
</dbReference>
<dbReference type="SMART" id="SM00129">
    <property type="entry name" value="KISc"/>
    <property type="match status" value="1"/>
</dbReference>
<dbReference type="SUPFAM" id="SSF52540">
    <property type="entry name" value="P-loop containing nucleoside triphosphate hydrolases"/>
    <property type="match status" value="1"/>
</dbReference>
<dbReference type="PROSITE" id="PS00411">
    <property type="entry name" value="KINESIN_MOTOR_1"/>
    <property type="match status" value="1"/>
</dbReference>
<dbReference type="PROSITE" id="PS50067">
    <property type="entry name" value="KINESIN_MOTOR_2"/>
    <property type="match status" value="1"/>
</dbReference>
<sequence length="1032" mass="117357">MAETNNECSIKVLCRFRPLNQAEILRGDKFIPIFQGDDSVVIGGKPYVFDRVFPPNTTQEQVYHACAMQIVKDVLAGYNGTIFAYGQTSSGKTHTMEGKLHDPQLMGIIPRIARDIFNHIYSMDENLEFHIKVSYFEIYLDKIRDLLDVTKTNLSVHEDKNRVPFVKGCTERFVSGPEEILDVIDEGKSNRHVAVTNMNEHSSRSHSIFLINIKQENMETEQKLSGKLYLVDLAGSEKVSKTGAEGAVLDEAKNINKSLSALGNVISALAEGTKSYVPYRDSKMTRILQDSLGGNCRTTMFICCSPSSYNDAETKSTLMFGQRAKTIKNTASVNLELTAEQWKKKYEKEKEKTKAQKETIAKLEAELSRWRNGENVPETERLAGEEAALGAELCEETPVNDNSSIVVRIAPEERQKYEEEIRRLYKQLDDKDDEINQQSQLIEKLKQQMLDQEELLVSTRGDNEKVQQELSHLQSENDAAKDEVKEVLQALEELAVNYDQKSQEVEEKSQQNQLLVDELSQKVATMLSLESELQRLQEVSGHQRKRIAEVLNGLMKDLSEFSVIVGNGEIKLPVEISGAIEEEFTVARLYISKIKSEVKSVVKRCRQLENLQVERHRKMEVTGRELSSCQLLISQHEAKIRSLTEYMQSVELKKRHLEESYDSLSDELAKLQAQETVHEVALKDKEPDTQDADEVKKALELQMESHREAHHRQLARLRDEINEKQKTIDELKDLNQKLQLELEKLQADYEKLKSEEHEKSTKLQELTFLYERHEQSKQDLKGLEETVARELQTLHNLRKLFVQDVTTRVKKSAEMEPEDSGGIHSQKQKISFLENNLEQLTKVHKQLVRDNADLRCELPKLEKRLRATAERVKALEGALKEAKEGAMKDKRRYQQEVDRIKEAVRYKSSGKRGHSAQIAKPVRPGHYPASSPTNPYGTRSPECISYTNSLFQNYQNLYLQATPSSTSDMYFANSCTGSGATSSGGPLASYQKANMDNGNATDIKDNRSDLPCGYEAEDQAKLFPLHQETAAS</sequence>
<feature type="initiator methionine" description="Removed" evidence="3">
    <location>
        <position position="1"/>
    </location>
</feature>
<feature type="chain" id="PRO_0000230789" description="Kinesin heavy chain isoform 5A">
    <location>
        <begin position="2"/>
        <end position="1032"/>
    </location>
</feature>
<feature type="domain" description="Kinesin motor" evidence="5">
    <location>
        <begin position="9"/>
        <end position="327"/>
    </location>
</feature>
<feature type="region of interest" description="Microtubule-binding">
    <location>
        <begin position="174"/>
        <end position="315"/>
    </location>
</feature>
<feature type="region of interest" description="Necessary for interaction with ZFYVE27" evidence="2">
    <location>
        <begin position="271"/>
        <end position="361"/>
    </location>
</feature>
<feature type="region of interest" description="Interaction with BICD2" evidence="3">
    <location>
        <begin position="353"/>
        <end position="1032"/>
    </location>
</feature>
<feature type="region of interest" description="Disordered" evidence="6">
    <location>
        <begin position="904"/>
        <end position="939"/>
    </location>
</feature>
<feature type="region of interest" description="Globular">
    <location>
        <begin position="907"/>
        <end position="1032"/>
    </location>
</feature>
<feature type="coiled-coil region">
    <location>
        <begin position="331"/>
        <end position="906"/>
    </location>
</feature>
<feature type="binding site" evidence="5">
    <location>
        <begin position="86"/>
        <end position="93"/>
    </location>
    <ligand>
        <name>ATP</name>
        <dbReference type="ChEBI" id="CHEBI:30616"/>
    </ligand>
</feature>
<feature type="modified residue" description="N-acetylalanine" evidence="3">
    <location>
        <position position="2"/>
    </location>
</feature>
<feature type="modified residue" description="Phosphothreonine" evidence="2">
    <location>
        <position position="397"/>
    </location>
</feature>
<proteinExistence type="evidence at transcript level"/>
<organism>
    <name type="scientific">Pongo abelii</name>
    <name type="common">Sumatran orangutan</name>
    <name type="synonym">Pongo pygmaeus abelii</name>
    <dbReference type="NCBI Taxonomy" id="9601"/>
    <lineage>
        <taxon>Eukaryota</taxon>
        <taxon>Metazoa</taxon>
        <taxon>Chordata</taxon>
        <taxon>Craniata</taxon>
        <taxon>Vertebrata</taxon>
        <taxon>Euteleostomi</taxon>
        <taxon>Mammalia</taxon>
        <taxon>Eutheria</taxon>
        <taxon>Euarchontoglires</taxon>
        <taxon>Primates</taxon>
        <taxon>Haplorrhini</taxon>
        <taxon>Catarrhini</taxon>
        <taxon>Hominidae</taxon>
        <taxon>Pongo</taxon>
    </lineage>
</organism>
<keyword id="KW-0007">Acetylation</keyword>
<keyword id="KW-0067">ATP-binding</keyword>
<keyword id="KW-0175">Coiled coil</keyword>
<keyword id="KW-0963">Cytoplasm</keyword>
<keyword id="KW-0206">Cytoskeleton</keyword>
<keyword id="KW-0378">Hydrolase</keyword>
<keyword id="KW-0413">Isomerase</keyword>
<keyword id="KW-0493">Microtubule</keyword>
<keyword id="KW-0505">Motor protein</keyword>
<keyword id="KW-0547">Nucleotide-binding</keyword>
<keyword id="KW-0597">Phosphoprotein</keyword>
<keyword id="KW-1185">Reference proteome</keyword>
<name>KIF5A_PONAB</name>
<protein>
    <recommendedName>
        <fullName>Kinesin heavy chain isoform 5A</fullName>
        <ecNumber evidence="3">5.6.1.3</ecNumber>
    </recommendedName>
</protein>
<accession>Q5R9K7</accession>
<reference key="1">
    <citation type="submission" date="2004-11" db="EMBL/GenBank/DDBJ databases">
        <authorList>
            <consortium name="The German cDNA consortium"/>
        </authorList>
    </citation>
    <scope>NUCLEOTIDE SEQUENCE [LARGE SCALE MRNA]</scope>
    <source>
        <tissue>Brain cortex</tissue>
    </source>
</reference>
<evidence type="ECO:0000250" key="1"/>
<evidence type="ECO:0000250" key="2">
    <source>
        <dbReference type="UniProtKB" id="P33175"/>
    </source>
</evidence>
<evidence type="ECO:0000250" key="3">
    <source>
        <dbReference type="UniProtKB" id="Q12840"/>
    </source>
</evidence>
<evidence type="ECO:0000250" key="4">
    <source>
        <dbReference type="UniProtKB" id="Q6QLM7"/>
    </source>
</evidence>
<evidence type="ECO:0000255" key="5">
    <source>
        <dbReference type="PROSITE-ProRule" id="PRU00283"/>
    </source>
</evidence>
<evidence type="ECO:0000256" key="6">
    <source>
        <dbReference type="SAM" id="MobiDB-lite"/>
    </source>
</evidence>
<gene>
    <name type="primary">KIF5A</name>
</gene>
<comment type="function">
    <text evidence="2 4">Microtubule-dependent motor required for slow axonal transport of neurofilament proteins (NFH, NFM and NFL). Can induce formation of neurite-like membrane protrusions in non-neuronal cells in a ZFYVE27-dependent manner. The ZFYVE27-KIF5A complex contributes to the vesicular transport of VAPA, VAPB, SURF4, RAB11A, RAB11B and RTN3 proteins in neurons. Required for anterograde axonal transportation of MAPK8IP3/JIP3 which is essential for MAPK8IP3/JIP3 function in axon elongation.</text>
</comment>
<comment type="catalytic activity">
    <reaction evidence="3">
        <text>ATP + H2O + a kinesin associated with a microtubule at position (n) = ADP + phosphate a kinesin associated with a microtubule at position (n+1, toward the plus end).</text>
        <dbReference type="EC" id="5.6.1.3"/>
    </reaction>
</comment>
<comment type="subunit">
    <text evidence="2 3">Oligomer composed of two heavy chains and two light chains. Interacts with GRIP1. Interacts with FMR1 (via C-terminus); this interaction is increased in a mGluR-dependent manner. Interacts with BORCS5. Interacts with ZFYVE27. Interacts with VAPA, VAPB, SURF4, RAB11A (GDP-bound form), RAB11B (GDP-bound form) and RTN3 in a ZFYVE27-dependent manner. Interacts with BICD2. Interacts with DTNB (By similarity).</text>
</comment>
<comment type="subcellular location">
    <subcellularLocation>
        <location evidence="4">Cytoplasm</location>
        <location evidence="4">Perinuclear region</location>
    </subcellularLocation>
    <subcellularLocation>
        <location evidence="4">Cytoplasm</location>
        <location evidence="4">Cytoskeleton</location>
    </subcellularLocation>
    <subcellularLocation>
        <location evidence="4">Perikaryon</location>
    </subcellularLocation>
    <text evidence="4">Concentrated in the cell body of the neurons, particularly in the perinuclear region.</text>
</comment>
<comment type="domain">
    <text evidence="1">Composed of three structural domains: a large globular N-terminal domain which is responsible for the motor activity of kinesin (it hydrolyzes ATP and binds microtubule), a central alpha-helical coiled coil domain that mediates the heavy chain dimerization; and a small globular C-terminal domain which interacts with other proteins (such as the kinesin light chains), vesicles and membranous organelles.</text>
</comment>
<comment type="similarity">
    <text evidence="5">Belongs to the TRAFAC class myosin-kinesin ATPase superfamily. Kinesin family. Kinesin subfamily.</text>
</comment>